<dbReference type="EMBL" id="AJ697891">
    <property type="protein sequence ID" value="CAG27022.1"/>
    <property type="molecule type" value="Genomic_DNA"/>
</dbReference>
<dbReference type="SMR" id="Q6ZXT2"/>
<dbReference type="TCDB" id="1.A.8.9.21">
    <property type="family name" value="the major intrinsic protein (mip) family"/>
</dbReference>
<dbReference type="GO" id="GO:0005886">
    <property type="term" value="C:plasma membrane"/>
    <property type="evidence" value="ECO:0000314"/>
    <property type="project" value="UniProtKB"/>
</dbReference>
<dbReference type="GO" id="GO:0015254">
    <property type="term" value="F:glycerol channel activity"/>
    <property type="evidence" value="ECO:0000314"/>
    <property type="project" value="UniProtKB"/>
</dbReference>
<dbReference type="GO" id="GO:0015166">
    <property type="term" value="F:polyol transmembrane transporter activity"/>
    <property type="evidence" value="ECO:0000314"/>
    <property type="project" value="UniProtKB"/>
</dbReference>
<dbReference type="GO" id="GO:0015204">
    <property type="term" value="F:urea transmembrane transporter activity"/>
    <property type="evidence" value="ECO:0000314"/>
    <property type="project" value="UniProtKB"/>
</dbReference>
<dbReference type="GO" id="GO:0015250">
    <property type="term" value="F:water channel activity"/>
    <property type="evidence" value="ECO:0000314"/>
    <property type="project" value="UniProtKB"/>
</dbReference>
<dbReference type="GO" id="GO:0015793">
    <property type="term" value="P:glycerol transmembrane transport"/>
    <property type="evidence" value="ECO:0000314"/>
    <property type="project" value="UniProtKB"/>
</dbReference>
<dbReference type="GO" id="GO:0015791">
    <property type="term" value="P:polyol transmembrane transport"/>
    <property type="evidence" value="ECO:0000314"/>
    <property type="project" value="UniProtKB"/>
</dbReference>
<dbReference type="GO" id="GO:0071918">
    <property type="term" value="P:urea transmembrane transport"/>
    <property type="evidence" value="ECO:0000314"/>
    <property type="project" value="UniProtKB"/>
</dbReference>
<dbReference type="GO" id="GO:0006833">
    <property type="term" value="P:water transport"/>
    <property type="evidence" value="ECO:0000314"/>
    <property type="project" value="UniProtKB"/>
</dbReference>
<dbReference type="CDD" id="cd00333">
    <property type="entry name" value="MIP"/>
    <property type="match status" value="1"/>
</dbReference>
<dbReference type="FunFam" id="1.20.1080.10:FF:000041">
    <property type="entry name" value="Aquaglyceroporin 2"/>
    <property type="match status" value="1"/>
</dbReference>
<dbReference type="Gene3D" id="1.20.1080.10">
    <property type="entry name" value="Glycerol uptake facilitator protein"/>
    <property type="match status" value="1"/>
</dbReference>
<dbReference type="InterPro" id="IPR023271">
    <property type="entry name" value="Aquaporin-like"/>
</dbReference>
<dbReference type="InterPro" id="IPR000425">
    <property type="entry name" value="MIP"/>
</dbReference>
<dbReference type="InterPro" id="IPR050363">
    <property type="entry name" value="MIP/Aquaporin"/>
</dbReference>
<dbReference type="InterPro" id="IPR022357">
    <property type="entry name" value="MIP_CS"/>
</dbReference>
<dbReference type="NCBIfam" id="TIGR00861">
    <property type="entry name" value="MIP"/>
    <property type="match status" value="1"/>
</dbReference>
<dbReference type="PANTHER" id="PTHR43829">
    <property type="entry name" value="AQUAPORIN OR AQUAGLYCEROPORIN RELATED"/>
    <property type="match status" value="1"/>
</dbReference>
<dbReference type="PANTHER" id="PTHR43829:SF9">
    <property type="entry name" value="AQUAPORIN-9"/>
    <property type="match status" value="1"/>
</dbReference>
<dbReference type="Pfam" id="PF00230">
    <property type="entry name" value="MIP"/>
    <property type="match status" value="1"/>
</dbReference>
<dbReference type="PRINTS" id="PR00783">
    <property type="entry name" value="MINTRINSICP"/>
</dbReference>
<dbReference type="SUPFAM" id="SSF81338">
    <property type="entry name" value="Aquaporin-like"/>
    <property type="match status" value="1"/>
</dbReference>
<dbReference type="PROSITE" id="PS00221">
    <property type="entry name" value="MIP"/>
    <property type="match status" value="1"/>
</dbReference>
<sequence length="304" mass="32752">MQSQPDNVAYPMELQAVNKDGTVEVRVQGNDDSSNRKHEVAEAQEKPVGGINFWAPRELRLNYRDYMGELLGTFVLLFMGNGVVATVIIDGKLGFLSITLGWGIAVTMALYVSLGISSGHLNPAVTVGNAVFGDFPWRKVPGYIAAQMLGAFLGAACAYGVFADLLKAHGGGELIAFGEKGTAGVFSTYPRDSNGLFSCIFGEFICTAMLLFCVCGIFDPNNSPAKGHEPLAVGALVFAIGNNIGYSTGYAINPARDFGPRVFSSFLYGGEVFSHANYYFWVPLVIPLFGGIFGLFLYKYFVPH</sequence>
<proteinExistence type="evidence at transcript level"/>
<comment type="function">
    <text evidence="4 5 6">Mediates water and glycerol transport across the cell membrane (PubMed:15294911, PubMed:21471730). Permeable to urea (PubMed:15294911). Permeable to methylamine/methylammonium (PubMed:16889642). Permeable to dihydroxyacetone (PubMed:15294911). Permeable to erythritol and ribitol (PubMed:15294911).</text>
</comment>
<comment type="catalytic activity">
    <reaction evidence="4">
        <text>glycerol(in) = glycerol(out)</text>
        <dbReference type="Rhea" id="RHEA:29675"/>
        <dbReference type="ChEBI" id="CHEBI:17754"/>
    </reaction>
</comment>
<comment type="catalytic activity">
    <reaction evidence="4">
        <text>H2O(in) = H2O(out)</text>
        <dbReference type="Rhea" id="RHEA:29667"/>
        <dbReference type="ChEBI" id="CHEBI:15377"/>
    </reaction>
</comment>
<comment type="catalytic activity">
    <reaction evidence="4">
        <text>urea(in) = urea(out)</text>
        <dbReference type="Rhea" id="RHEA:32799"/>
        <dbReference type="ChEBI" id="CHEBI:16199"/>
    </reaction>
</comment>
<comment type="subcellular location">
    <subcellularLocation>
        <location evidence="6">Cell membrane</location>
        <topology evidence="2">Multi-pass membrane protein</topology>
    </subcellularLocation>
</comment>
<comment type="developmental stage">
    <text evidence="4">Expressed in bloodstream form parasites.</text>
</comment>
<comment type="domain">
    <text evidence="1">Aquaporins contain two tandem repeats each containing three membrane-spanning domains and a pore-forming loop with the signature motif Asn-Pro-Ala (NPA).</text>
</comment>
<comment type="disruption phenotype">
    <text evidence="6">RNAi-mediated knockdown results in no significant effects on parasite growth (PubMed:21471730). Prolonged swelling times during hypo-osmotic shock (PubMed:21471730). No significant effects on regulatory volume recovery phase during hypo-osmotic shock (PubMed:21471730).</text>
</comment>
<comment type="similarity">
    <text evidence="3">Belongs to the MIP/aquaporin (TC 1.A.8) family.</text>
</comment>
<accession>Q6ZXT2</accession>
<keyword id="KW-1003">Cell membrane</keyword>
<keyword id="KW-0472">Membrane</keyword>
<keyword id="KW-0812">Transmembrane</keyword>
<keyword id="KW-1133">Transmembrane helix</keyword>
<keyword id="KW-0813">Transport</keyword>
<evidence type="ECO:0000250" key="1">
    <source>
        <dbReference type="UniProtKB" id="P55087"/>
    </source>
</evidence>
<evidence type="ECO:0000255" key="2"/>
<evidence type="ECO:0000255" key="3">
    <source>
        <dbReference type="RuleBase" id="RU000477"/>
    </source>
</evidence>
<evidence type="ECO:0000269" key="4">
    <source>
    </source>
</evidence>
<evidence type="ECO:0000269" key="5">
    <source>
    </source>
</evidence>
<evidence type="ECO:0000269" key="6">
    <source>
    </source>
</evidence>
<evidence type="ECO:0000303" key="7">
    <source>
    </source>
</evidence>
<evidence type="ECO:0000305" key="8"/>
<evidence type="ECO:0000312" key="9">
    <source>
        <dbReference type="EMBL" id="CAG27022.1"/>
    </source>
</evidence>
<organism evidence="9">
    <name type="scientific">Trypanosoma brucei brucei</name>
    <dbReference type="NCBI Taxonomy" id="5702"/>
    <lineage>
        <taxon>Eukaryota</taxon>
        <taxon>Discoba</taxon>
        <taxon>Euglenozoa</taxon>
        <taxon>Kinetoplastea</taxon>
        <taxon>Metakinetoplastina</taxon>
        <taxon>Trypanosomatida</taxon>
        <taxon>Trypanosomatidae</taxon>
        <taxon>Trypanosoma</taxon>
    </lineage>
</organism>
<feature type="chain" id="PRO_0000460641" description="Aquaglyceroporin-3">
    <location>
        <begin position="1"/>
        <end position="304"/>
    </location>
</feature>
<feature type="topological domain" description="Cytoplasmic" evidence="8">
    <location>
        <begin position="1"/>
        <end position="68"/>
    </location>
</feature>
<feature type="transmembrane region" description="Helical" evidence="2">
    <location>
        <begin position="69"/>
        <end position="89"/>
    </location>
</feature>
<feature type="topological domain" description="Extracellular" evidence="8">
    <location>
        <begin position="90"/>
        <end position="95"/>
    </location>
</feature>
<feature type="transmembrane region" description="Helical" evidence="2">
    <location>
        <begin position="96"/>
        <end position="116"/>
    </location>
</feature>
<feature type="topological domain" description="Cytoplasmic" evidence="8">
    <location>
        <begin position="117"/>
        <end position="142"/>
    </location>
</feature>
<feature type="transmembrane region" description="Helical" evidence="2">
    <location>
        <begin position="143"/>
        <end position="163"/>
    </location>
</feature>
<feature type="topological domain" description="Extracellular" evidence="8">
    <location>
        <begin position="164"/>
        <end position="196"/>
    </location>
</feature>
<feature type="transmembrane region" description="Helical" evidence="2">
    <location>
        <begin position="197"/>
        <end position="217"/>
    </location>
</feature>
<feature type="topological domain" description="Cytoplasmic" evidence="8">
    <location>
        <begin position="218"/>
        <end position="231"/>
    </location>
</feature>
<feature type="transmembrane region" description="Helical" evidence="2">
    <location>
        <begin position="232"/>
        <end position="252"/>
    </location>
</feature>
<feature type="topological domain" description="Extracellular" evidence="8">
    <location>
        <begin position="253"/>
        <end position="277"/>
    </location>
</feature>
<feature type="transmembrane region" description="Helical" evidence="2">
    <location>
        <begin position="278"/>
        <end position="298"/>
    </location>
</feature>
<feature type="topological domain" description="Cytoplasmic" evidence="8">
    <location>
        <begin position="299"/>
        <end position="304"/>
    </location>
</feature>
<name>AQP3_TRYBB</name>
<protein>
    <recommendedName>
        <fullName evidence="7">Aquaglyceroporin-3</fullName>
        <shortName evidence="7">TbAQP3</shortName>
    </recommendedName>
</protein>
<reference evidence="9" key="1">
    <citation type="journal article" date="2004" name="J. Biol. Chem.">
        <title>Cloning, heterologous expression, and characterization of three aquaglyceroporins from Trypanosoma brucei.</title>
        <authorList>
            <person name="Uzcategui N.L."/>
            <person name="Szallies A."/>
            <person name="Pavlovic-Djuranovic S."/>
            <person name="Palmada M."/>
            <person name="Figarella K."/>
            <person name="Boehmer C."/>
            <person name="Lang F."/>
            <person name="Beitz E."/>
            <person name="Duszenko M."/>
        </authorList>
    </citation>
    <scope>NUCLEOTIDE SEQUENCE [GENOMIC DNA]</scope>
    <scope>FUNCTION</scope>
    <scope>TRANSPORTER ACTIVITY</scope>
    <scope>DEVELOPMENTAL STAGE</scope>
</reference>
<reference evidence="8" key="2">
    <citation type="journal article" date="2006" name="Mol. Microbiol.">
        <title>Ammonia permeability of the aquaglyceroporins from Plasmodium falciparum, Toxoplasma gondii and Trypansoma brucei.</title>
        <authorList>
            <person name="Zeuthen T."/>
            <person name="Wu B."/>
            <person name="Pavlovic-Djuranovic S."/>
            <person name="Holm L.M."/>
            <person name="Uzcategui N.L."/>
            <person name="Duszenko M."/>
            <person name="Kun J.F."/>
            <person name="Schultz J.E."/>
            <person name="Beitz E."/>
        </authorList>
    </citation>
    <scope>FUNCTION</scope>
</reference>
<reference evidence="8" key="3">
    <citation type="journal article" date="2011" name="Cell. Physiol. Biochem.">
        <title>Functional characterization of three aquaglyceroporins from Trypanosoma brucei in osmoregulation and glycerol transport.</title>
        <authorList>
            <person name="Bassarak B."/>
            <person name="Uzcategui N.L."/>
            <person name="Schoenfeld C."/>
            <person name="Duszenko M."/>
        </authorList>
    </citation>
    <scope>FUNCTION</scope>
    <scope>SUBCELLULAR LOCATION</scope>
    <scope>DISRUPTION PHENOTYPE</scope>
</reference>
<gene>
    <name evidence="9" type="primary">AQP3</name>
</gene>